<sequence length="163" mass="18224">MALYETILIARQDITASQVEGLTETFTGILKENGGEVKKVEQWGLKTLTYRIKKNRKAHYVYIGHEAPAAAVAEMERNMSINEDVLRFMTVKVEKIEEGQTAMLTNKGERSERGPRGGFGDRGPRRDFGDRGPRRDFGDRGPRRDGDGPRAEGGRNEGEGDRA</sequence>
<organism>
    <name type="scientific">Rhodospirillum centenum (strain ATCC 51521 / SW)</name>
    <dbReference type="NCBI Taxonomy" id="414684"/>
    <lineage>
        <taxon>Bacteria</taxon>
        <taxon>Pseudomonadati</taxon>
        <taxon>Pseudomonadota</taxon>
        <taxon>Alphaproteobacteria</taxon>
        <taxon>Rhodospirillales</taxon>
        <taxon>Rhodospirillaceae</taxon>
        <taxon>Rhodospirillum</taxon>
    </lineage>
</organism>
<reference key="1">
    <citation type="submission" date="2007-03" db="EMBL/GenBank/DDBJ databases">
        <title>Genome sequence of Rhodospirillum centenum.</title>
        <authorList>
            <person name="Touchman J.W."/>
            <person name="Bauer C."/>
            <person name="Blankenship R.E."/>
        </authorList>
    </citation>
    <scope>NUCLEOTIDE SEQUENCE [LARGE SCALE GENOMIC DNA]</scope>
    <source>
        <strain>ATCC 51521 / SW</strain>
    </source>
</reference>
<feature type="chain" id="PRO_1000120794" description="Small ribosomal subunit protein bS6">
    <location>
        <begin position="1"/>
        <end position="163"/>
    </location>
</feature>
<feature type="region of interest" description="Disordered" evidence="2">
    <location>
        <begin position="97"/>
        <end position="163"/>
    </location>
</feature>
<feature type="compositionally biased region" description="Basic and acidic residues" evidence="2">
    <location>
        <begin position="122"/>
        <end position="163"/>
    </location>
</feature>
<protein>
    <recommendedName>
        <fullName evidence="1">Small ribosomal subunit protein bS6</fullName>
    </recommendedName>
    <alternativeName>
        <fullName evidence="3">30S ribosomal protein S6</fullName>
    </alternativeName>
</protein>
<accession>B6IN79</accession>
<gene>
    <name evidence="1" type="primary">rpsF</name>
    <name type="ordered locus">RC1_1573</name>
</gene>
<keyword id="KW-1185">Reference proteome</keyword>
<keyword id="KW-0687">Ribonucleoprotein</keyword>
<keyword id="KW-0689">Ribosomal protein</keyword>
<keyword id="KW-0694">RNA-binding</keyword>
<keyword id="KW-0699">rRNA-binding</keyword>
<proteinExistence type="inferred from homology"/>
<dbReference type="EMBL" id="CP000613">
    <property type="protein sequence ID" value="ACI98976.1"/>
    <property type="molecule type" value="Genomic_DNA"/>
</dbReference>
<dbReference type="RefSeq" id="WP_012566761.1">
    <property type="nucleotide sequence ID" value="NC_011420.2"/>
</dbReference>
<dbReference type="SMR" id="B6IN79"/>
<dbReference type="STRING" id="414684.RC1_1573"/>
<dbReference type="KEGG" id="rce:RC1_1573"/>
<dbReference type="eggNOG" id="COG0360">
    <property type="taxonomic scope" value="Bacteria"/>
</dbReference>
<dbReference type="HOGENOM" id="CLU_113441_2_0_5"/>
<dbReference type="OrthoDB" id="9812702at2"/>
<dbReference type="Proteomes" id="UP000001591">
    <property type="component" value="Chromosome"/>
</dbReference>
<dbReference type="GO" id="GO:0022627">
    <property type="term" value="C:cytosolic small ribosomal subunit"/>
    <property type="evidence" value="ECO:0007669"/>
    <property type="project" value="TreeGrafter"/>
</dbReference>
<dbReference type="GO" id="GO:0070181">
    <property type="term" value="F:small ribosomal subunit rRNA binding"/>
    <property type="evidence" value="ECO:0007669"/>
    <property type="project" value="TreeGrafter"/>
</dbReference>
<dbReference type="GO" id="GO:0003735">
    <property type="term" value="F:structural constituent of ribosome"/>
    <property type="evidence" value="ECO:0007669"/>
    <property type="project" value="InterPro"/>
</dbReference>
<dbReference type="GO" id="GO:0006412">
    <property type="term" value="P:translation"/>
    <property type="evidence" value="ECO:0007669"/>
    <property type="project" value="UniProtKB-UniRule"/>
</dbReference>
<dbReference type="CDD" id="cd00473">
    <property type="entry name" value="bS6"/>
    <property type="match status" value="1"/>
</dbReference>
<dbReference type="Gene3D" id="3.30.70.60">
    <property type="match status" value="1"/>
</dbReference>
<dbReference type="HAMAP" id="MF_00360">
    <property type="entry name" value="Ribosomal_bS6"/>
    <property type="match status" value="1"/>
</dbReference>
<dbReference type="InterPro" id="IPR000529">
    <property type="entry name" value="Ribosomal_bS6"/>
</dbReference>
<dbReference type="InterPro" id="IPR035980">
    <property type="entry name" value="Ribosomal_bS6_sf"/>
</dbReference>
<dbReference type="InterPro" id="IPR020814">
    <property type="entry name" value="Ribosomal_S6_plastid/chlpt"/>
</dbReference>
<dbReference type="InterPro" id="IPR014717">
    <property type="entry name" value="Transl_elong_EF1B/ribsomal_bS6"/>
</dbReference>
<dbReference type="NCBIfam" id="TIGR00166">
    <property type="entry name" value="S6"/>
    <property type="match status" value="1"/>
</dbReference>
<dbReference type="PANTHER" id="PTHR21011">
    <property type="entry name" value="MITOCHONDRIAL 28S RIBOSOMAL PROTEIN S6"/>
    <property type="match status" value="1"/>
</dbReference>
<dbReference type="PANTHER" id="PTHR21011:SF1">
    <property type="entry name" value="SMALL RIBOSOMAL SUBUNIT PROTEIN BS6M"/>
    <property type="match status" value="1"/>
</dbReference>
<dbReference type="Pfam" id="PF01250">
    <property type="entry name" value="Ribosomal_S6"/>
    <property type="match status" value="1"/>
</dbReference>
<dbReference type="SUPFAM" id="SSF54995">
    <property type="entry name" value="Ribosomal protein S6"/>
    <property type="match status" value="1"/>
</dbReference>
<evidence type="ECO:0000255" key="1">
    <source>
        <dbReference type="HAMAP-Rule" id="MF_00360"/>
    </source>
</evidence>
<evidence type="ECO:0000256" key="2">
    <source>
        <dbReference type="SAM" id="MobiDB-lite"/>
    </source>
</evidence>
<evidence type="ECO:0000305" key="3"/>
<name>RS6_RHOCS</name>
<comment type="function">
    <text evidence="1">Binds together with bS18 to 16S ribosomal RNA.</text>
</comment>
<comment type="similarity">
    <text evidence="1">Belongs to the bacterial ribosomal protein bS6 family.</text>
</comment>